<sequence>MGISEVQVFLALIIALIPGILADRLGKELNK</sequence>
<reference key="1">
    <citation type="journal article" date="2001" name="Mol. Gen. Genet.">
        <title>Comparison of psbK operon organization and group III intron content in chloroplast genomes of 12 Euglenoid species.</title>
        <authorList>
            <person name="Doetsch N.A."/>
            <person name="Thompson M.D."/>
            <person name="Favreau M.R."/>
            <person name="Hallick R.B."/>
        </authorList>
    </citation>
    <scope>NUCLEOTIDE SEQUENCE [GENOMIC DNA]</scope>
</reference>
<comment type="subcellular location">
    <subcellularLocation>
        <location evidence="1">Plastid</location>
        <location evidence="1">Chloroplast thylakoid membrane</location>
        <topology evidence="1">Single-pass membrane protein</topology>
    </subcellularLocation>
</comment>
<comment type="similarity">
    <text evidence="1">Belongs to the PsaM family.</text>
</comment>
<protein>
    <recommendedName>
        <fullName evidence="1">Photosystem I reaction center subunit XII</fullName>
    </recommendedName>
    <alternativeName>
        <fullName evidence="1">PSI-M</fullName>
    </alternativeName>
</protein>
<keyword id="KW-0150">Chloroplast</keyword>
<keyword id="KW-0472">Membrane</keyword>
<keyword id="KW-0602">Photosynthesis</keyword>
<keyword id="KW-0603">Photosystem I</keyword>
<keyword id="KW-0934">Plastid</keyword>
<keyword id="KW-0793">Thylakoid</keyword>
<keyword id="KW-0812">Transmembrane</keyword>
<keyword id="KW-1133">Transmembrane helix</keyword>
<proteinExistence type="inferred from homology"/>
<accession>Q9MS68</accession>
<name>PSAM_EUGDE</name>
<organism>
    <name type="scientific">Euglena deses</name>
    <dbReference type="NCBI Taxonomy" id="66845"/>
    <lineage>
        <taxon>Eukaryota</taxon>
        <taxon>Discoba</taxon>
        <taxon>Euglenozoa</taxon>
        <taxon>Euglenida</taxon>
        <taxon>Spirocuta</taxon>
        <taxon>Euglenophyceae</taxon>
        <taxon>Euglenales</taxon>
        <taxon>Euglenaceae</taxon>
        <taxon>Euglena</taxon>
    </lineage>
</organism>
<dbReference type="EMBL" id="AF241279">
    <property type="protein sequence ID" value="AAF82447.1"/>
    <property type="molecule type" value="Genomic_DNA"/>
</dbReference>
<dbReference type="SMR" id="Q9MS68"/>
<dbReference type="GO" id="GO:0009535">
    <property type="term" value="C:chloroplast thylakoid membrane"/>
    <property type="evidence" value="ECO:0007669"/>
    <property type="project" value="UniProtKB-SubCell"/>
</dbReference>
<dbReference type="GO" id="GO:0009522">
    <property type="term" value="C:photosystem I"/>
    <property type="evidence" value="ECO:0007669"/>
    <property type="project" value="UniProtKB-KW"/>
</dbReference>
<dbReference type="GO" id="GO:0015979">
    <property type="term" value="P:photosynthesis"/>
    <property type="evidence" value="ECO:0007669"/>
    <property type="project" value="UniProtKB-UniRule"/>
</dbReference>
<dbReference type="HAMAP" id="MF_00828">
    <property type="entry name" value="PSI_PsaM"/>
    <property type="match status" value="1"/>
</dbReference>
<dbReference type="InterPro" id="IPR010010">
    <property type="entry name" value="PSI_PsaM"/>
</dbReference>
<dbReference type="InterPro" id="IPR037279">
    <property type="entry name" value="PSI_PsaM_sf"/>
</dbReference>
<dbReference type="NCBIfam" id="TIGR03053">
    <property type="entry name" value="PS_I_psaM"/>
    <property type="match status" value="1"/>
</dbReference>
<dbReference type="Pfam" id="PF07465">
    <property type="entry name" value="PsaM"/>
    <property type="match status" value="1"/>
</dbReference>
<dbReference type="SUPFAM" id="SSF81548">
    <property type="entry name" value="Subunit XII of photosystem I reaction centre, PsaM"/>
    <property type="match status" value="1"/>
</dbReference>
<geneLocation type="chloroplast"/>
<gene>
    <name evidence="1" type="primary">psaM</name>
</gene>
<evidence type="ECO:0000255" key="1">
    <source>
        <dbReference type="HAMAP-Rule" id="MF_00828"/>
    </source>
</evidence>
<feature type="chain" id="PRO_0000277401" description="Photosystem I reaction center subunit XII">
    <location>
        <begin position="1"/>
        <end position="31"/>
    </location>
</feature>
<feature type="transmembrane region" description="Helical" evidence="1">
    <location>
        <begin position="7"/>
        <end position="26"/>
    </location>
</feature>